<accession>C1DAR7</accession>
<keyword id="KW-0488">Methylation</keyword>
<keyword id="KW-1185">Reference proteome</keyword>
<keyword id="KW-0687">Ribonucleoprotein</keyword>
<keyword id="KW-0689">Ribosomal protein</keyword>
<keyword id="KW-0694">RNA-binding</keyword>
<keyword id="KW-0699">rRNA-binding</keyword>
<name>RL3_LARHH</name>
<dbReference type="EMBL" id="CP001154">
    <property type="protein sequence ID" value="ACO73248.1"/>
    <property type="molecule type" value="Genomic_DNA"/>
</dbReference>
<dbReference type="RefSeq" id="WP_012695742.1">
    <property type="nucleotide sequence ID" value="NC_012559.1"/>
</dbReference>
<dbReference type="SMR" id="C1DAR7"/>
<dbReference type="STRING" id="557598.LHK_00253"/>
<dbReference type="GeneID" id="75109507"/>
<dbReference type="KEGG" id="lhk:LHK_00253"/>
<dbReference type="eggNOG" id="COG0087">
    <property type="taxonomic scope" value="Bacteria"/>
</dbReference>
<dbReference type="HOGENOM" id="CLU_044142_4_1_4"/>
<dbReference type="Proteomes" id="UP000002010">
    <property type="component" value="Chromosome"/>
</dbReference>
<dbReference type="GO" id="GO:0022625">
    <property type="term" value="C:cytosolic large ribosomal subunit"/>
    <property type="evidence" value="ECO:0007669"/>
    <property type="project" value="TreeGrafter"/>
</dbReference>
<dbReference type="GO" id="GO:0019843">
    <property type="term" value="F:rRNA binding"/>
    <property type="evidence" value="ECO:0007669"/>
    <property type="project" value="UniProtKB-UniRule"/>
</dbReference>
<dbReference type="GO" id="GO:0003735">
    <property type="term" value="F:structural constituent of ribosome"/>
    <property type="evidence" value="ECO:0007669"/>
    <property type="project" value="InterPro"/>
</dbReference>
<dbReference type="GO" id="GO:0006412">
    <property type="term" value="P:translation"/>
    <property type="evidence" value="ECO:0007669"/>
    <property type="project" value="UniProtKB-UniRule"/>
</dbReference>
<dbReference type="FunFam" id="2.40.30.10:FF:000004">
    <property type="entry name" value="50S ribosomal protein L3"/>
    <property type="match status" value="1"/>
</dbReference>
<dbReference type="FunFam" id="3.30.160.810:FF:000001">
    <property type="entry name" value="50S ribosomal protein L3"/>
    <property type="match status" value="1"/>
</dbReference>
<dbReference type="Gene3D" id="3.30.160.810">
    <property type="match status" value="1"/>
</dbReference>
<dbReference type="Gene3D" id="2.40.30.10">
    <property type="entry name" value="Translation factors"/>
    <property type="match status" value="1"/>
</dbReference>
<dbReference type="HAMAP" id="MF_01325_B">
    <property type="entry name" value="Ribosomal_uL3_B"/>
    <property type="match status" value="1"/>
</dbReference>
<dbReference type="InterPro" id="IPR000597">
    <property type="entry name" value="Ribosomal_uL3"/>
</dbReference>
<dbReference type="InterPro" id="IPR019927">
    <property type="entry name" value="Ribosomal_uL3_bac/org-type"/>
</dbReference>
<dbReference type="InterPro" id="IPR019926">
    <property type="entry name" value="Ribosomal_uL3_CS"/>
</dbReference>
<dbReference type="InterPro" id="IPR009000">
    <property type="entry name" value="Transl_B-barrel_sf"/>
</dbReference>
<dbReference type="NCBIfam" id="TIGR03625">
    <property type="entry name" value="L3_bact"/>
    <property type="match status" value="1"/>
</dbReference>
<dbReference type="PANTHER" id="PTHR11229">
    <property type="entry name" value="50S RIBOSOMAL PROTEIN L3"/>
    <property type="match status" value="1"/>
</dbReference>
<dbReference type="PANTHER" id="PTHR11229:SF16">
    <property type="entry name" value="LARGE RIBOSOMAL SUBUNIT PROTEIN UL3C"/>
    <property type="match status" value="1"/>
</dbReference>
<dbReference type="Pfam" id="PF00297">
    <property type="entry name" value="Ribosomal_L3"/>
    <property type="match status" value="1"/>
</dbReference>
<dbReference type="SUPFAM" id="SSF50447">
    <property type="entry name" value="Translation proteins"/>
    <property type="match status" value="1"/>
</dbReference>
<dbReference type="PROSITE" id="PS00474">
    <property type="entry name" value="RIBOSOMAL_L3"/>
    <property type="match status" value="1"/>
</dbReference>
<evidence type="ECO:0000255" key="1">
    <source>
        <dbReference type="HAMAP-Rule" id="MF_01325"/>
    </source>
</evidence>
<evidence type="ECO:0000256" key="2">
    <source>
        <dbReference type="SAM" id="MobiDB-lite"/>
    </source>
</evidence>
<evidence type="ECO:0000305" key="3"/>
<sequence>MSLGLVGRKVGMTRVFAEDGQSIPVTVLDMSANRVTQIKTADTDGYNAVQVAYGSKKANRVLKAEAGHFAKAGVEAGRGLKEFTADAAKLAELKVGDTLTVELFQVGQLVDVTGTSQGKGFSGVIKRHNFSSNRASHGNSVTTRAPGSIGQAQDPGRVFPGKRMAGQYGNVKRTVQSLEVVRIDAERQLLLIKGSVPGSKGNDVVVLPAVKAGA</sequence>
<feature type="chain" id="PRO_1000165890" description="Large ribosomal subunit protein uL3">
    <location>
        <begin position="1"/>
        <end position="214"/>
    </location>
</feature>
<feature type="region of interest" description="Disordered" evidence="2">
    <location>
        <begin position="132"/>
        <end position="155"/>
    </location>
</feature>
<feature type="compositionally biased region" description="Polar residues" evidence="2">
    <location>
        <begin position="132"/>
        <end position="145"/>
    </location>
</feature>
<feature type="modified residue" description="N5-methylglutamine" evidence="1">
    <location>
        <position position="153"/>
    </location>
</feature>
<proteinExistence type="inferred from homology"/>
<organism>
    <name type="scientific">Laribacter hongkongensis (strain HLHK9)</name>
    <dbReference type="NCBI Taxonomy" id="557598"/>
    <lineage>
        <taxon>Bacteria</taxon>
        <taxon>Pseudomonadati</taxon>
        <taxon>Pseudomonadota</taxon>
        <taxon>Betaproteobacteria</taxon>
        <taxon>Neisseriales</taxon>
        <taxon>Aquaspirillaceae</taxon>
        <taxon>Laribacter</taxon>
    </lineage>
</organism>
<reference key="1">
    <citation type="journal article" date="2009" name="PLoS Genet.">
        <title>The complete genome and proteome of Laribacter hongkongensis reveal potential mechanisms for adaptations to different temperatures and habitats.</title>
        <authorList>
            <person name="Woo P.C.Y."/>
            <person name="Lau S.K.P."/>
            <person name="Tse H."/>
            <person name="Teng J.L.L."/>
            <person name="Curreem S.O."/>
            <person name="Tsang A.K.L."/>
            <person name="Fan R.Y.Y."/>
            <person name="Wong G.K.M."/>
            <person name="Huang Y."/>
            <person name="Loman N.J."/>
            <person name="Snyder L.A.S."/>
            <person name="Cai J.J."/>
            <person name="Huang J.-D."/>
            <person name="Mak W."/>
            <person name="Pallen M.J."/>
            <person name="Lok S."/>
            <person name="Yuen K.-Y."/>
        </authorList>
    </citation>
    <scope>NUCLEOTIDE SEQUENCE [LARGE SCALE GENOMIC DNA]</scope>
    <source>
        <strain>HLHK9</strain>
    </source>
</reference>
<protein>
    <recommendedName>
        <fullName evidence="1">Large ribosomal subunit protein uL3</fullName>
    </recommendedName>
    <alternativeName>
        <fullName evidence="3">50S ribosomal protein L3</fullName>
    </alternativeName>
</protein>
<comment type="function">
    <text evidence="1">One of the primary rRNA binding proteins, it binds directly near the 3'-end of the 23S rRNA, where it nucleates assembly of the 50S subunit.</text>
</comment>
<comment type="subunit">
    <text evidence="1">Part of the 50S ribosomal subunit. Forms a cluster with proteins L14 and L19.</text>
</comment>
<comment type="PTM">
    <text evidence="1">Methylated by PrmB.</text>
</comment>
<comment type="similarity">
    <text evidence="1">Belongs to the universal ribosomal protein uL3 family.</text>
</comment>
<gene>
    <name evidence="1" type="primary">rplC</name>
    <name type="ordered locus">LHK_00253</name>
</gene>